<evidence type="ECO:0000250" key="1"/>
<evidence type="ECO:0000305" key="2"/>
<accession>Q6GPY0</accession>
<feature type="chain" id="PRO_0000228067" description="Mitochondrial import inner membrane translocase subunit Tim13-A">
    <location>
        <begin position="1"/>
        <end position="96"/>
    </location>
</feature>
<feature type="short sequence motif" description="Twin CX3C motif">
    <location>
        <begin position="47"/>
        <end position="70"/>
    </location>
</feature>
<feature type="disulfide bond" evidence="1">
    <location>
        <begin position="47"/>
        <end position="70"/>
    </location>
</feature>
<feature type="disulfide bond" evidence="1">
    <location>
        <begin position="51"/>
        <end position="66"/>
    </location>
</feature>
<organism>
    <name type="scientific">Xenopus laevis</name>
    <name type="common">African clawed frog</name>
    <dbReference type="NCBI Taxonomy" id="8355"/>
    <lineage>
        <taxon>Eukaryota</taxon>
        <taxon>Metazoa</taxon>
        <taxon>Chordata</taxon>
        <taxon>Craniata</taxon>
        <taxon>Vertebrata</taxon>
        <taxon>Euteleostomi</taxon>
        <taxon>Amphibia</taxon>
        <taxon>Batrachia</taxon>
        <taxon>Anura</taxon>
        <taxon>Pipoidea</taxon>
        <taxon>Pipidae</taxon>
        <taxon>Xenopodinae</taxon>
        <taxon>Xenopus</taxon>
        <taxon>Xenopus</taxon>
    </lineage>
</organism>
<reference key="1">
    <citation type="submission" date="2004-06" db="EMBL/GenBank/DDBJ databases">
        <authorList>
            <consortium name="NIH - Xenopus Gene Collection (XGC) project"/>
        </authorList>
    </citation>
    <scope>NUCLEOTIDE SEQUENCE [LARGE SCALE MRNA]</scope>
    <source>
        <tissue>Spleen</tissue>
    </source>
</reference>
<name>TI13A_XENLA</name>
<comment type="function">
    <text evidence="1">Mitochondrial intermembrane chaperone that participates in the import and insertion of some multi-pass transmembrane proteins into the mitochondrial inner membrane. Also required for the transfer of beta-barrel precursors from the TOM complex to the sorting and assembly machinery (SAM complex) of the outer membrane. Acts as a chaperone-like protein that protects the hydrophobic precursors from aggregation and guide them through the mitochondrial intermembrane space. The TIMM8-TIMM13 complex mediates the import of some proteins while the predominant TIMM9-TIMM10 70 kDa complex mediates the import of much more proteins (By similarity).</text>
</comment>
<comment type="subunit">
    <text evidence="1">Heterohexamer; composed of 3 copies of TIMM8 (TIMM8A or TIMM8B) and 3 copies of TIMM13, named soluble 70 kDa complex. Associates with the TIM22 complex, whose core is composed of TIMM22 (By similarity).</text>
</comment>
<comment type="subcellular location">
    <subcellularLocation>
        <location evidence="1">Mitochondrion inner membrane</location>
        <topology evidence="1">Peripheral membrane protein</topology>
        <orientation evidence="1">Intermembrane side</orientation>
    </subcellularLocation>
</comment>
<comment type="domain">
    <text evidence="1">The twin CX3C motif contains 4 conserved Cys residues that form 2 disulfide bonds in the mitochondrial intermembrane space. However, during the transit of timm13-A from cytoplasm into mitochondrion, the Cys residues probably coordinate zinc, thereby preventing folding and allowing its transfer across mitochondrial outer membrane (By similarity).</text>
</comment>
<comment type="similarity">
    <text evidence="2">Belongs to the small Tim family.</text>
</comment>
<comment type="sequence caution" evidence="2">
    <conflict type="erroneous initiation">
        <sequence resource="EMBL-CDS" id="AAH72975"/>
    </conflict>
</comment>
<sequence>MEGFGSDFSVGGSSAGKVDTGAIMEQVKVQIAVANAQELLQRMTDKCFRKCIGKPGGSLDNSEQKCIAMCMDRYMDAWNTVSRAYNSRLQRERAKM</sequence>
<keyword id="KW-0143">Chaperone</keyword>
<keyword id="KW-1015">Disulfide bond</keyword>
<keyword id="KW-0472">Membrane</keyword>
<keyword id="KW-0479">Metal-binding</keyword>
<keyword id="KW-0496">Mitochondrion</keyword>
<keyword id="KW-0999">Mitochondrion inner membrane</keyword>
<keyword id="KW-0653">Protein transport</keyword>
<keyword id="KW-1185">Reference proteome</keyword>
<keyword id="KW-0811">Translocation</keyword>
<keyword id="KW-0813">Transport</keyword>
<keyword id="KW-0862">Zinc</keyword>
<gene>
    <name type="primary">timm13-a</name>
    <name type="synonym">tim13a-a</name>
    <name type="synonym">timm13a-a</name>
</gene>
<proteinExistence type="inferred from homology"/>
<protein>
    <recommendedName>
        <fullName>Mitochondrial import inner membrane translocase subunit Tim13-A</fullName>
    </recommendedName>
</protein>
<dbReference type="EMBL" id="BC072975">
    <property type="protein sequence ID" value="AAH72975.1"/>
    <property type="status" value="ALT_INIT"/>
    <property type="molecule type" value="mRNA"/>
</dbReference>
<dbReference type="RefSeq" id="NP_001093227.1">
    <property type="nucleotide sequence ID" value="NM_001099757.1"/>
</dbReference>
<dbReference type="SMR" id="Q6GPY0"/>
<dbReference type="GeneID" id="443601"/>
<dbReference type="KEGG" id="xla:443601"/>
<dbReference type="AGR" id="Xenbase:XB-GENE-993983"/>
<dbReference type="CTD" id="443601"/>
<dbReference type="Xenbase" id="XB-GENE-993983">
    <property type="gene designation" value="timm13.L"/>
</dbReference>
<dbReference type="OMA" id="MAAWNQV"/>
<dbReference type="OrthoDB" id="7813104at2759"/>
<dbReference type="Proteomes" id="UP000186698">
    <property type="component" value="Chromosome 1L"/>
</dbReference>
<dbReference type="Bgee" id="443601">
    <property type="expression patterns" value="Expressed in muscle tissue and 19 other cell types or tissues"/>
</dbReference>
<dbReference type="GO" id="GO:0005743">
    <property type="term" value="C:mitochondrial inner membrane"/>
    <property type="evidence" value="ECO:0007669"/>
    <property type="project" value="UniProtKB-SubCell"/>
</dbReference>
<dbReference type="GO" id="GO:0046872">
    <property type="term" value="F:metal ion binding"/>
    <property type="evidence" value="ECO:0007669"/>
    <property type="project" value="UniProtKB-KW"/>
</dbReference>
<dbReference type="GO" id="GO:0015031">
    <property type="term" value="P:protein transport"/>
    <property type="evidence" value="ECO:0007669"/>
    <property type="project" value="UniProtKB-KW"/>
</dbReference>
<dbReference type="FunFam" id="1.10.287.810:FF:000001">
    <property type="entry name" value="mitochondrial import inner membrane translocase subunit TIM13"/>
    <property type="match status" value="1"/>
</dbReference>
<dbReference type="Gene3D" id="1.10.287.810">
    <property type="entry name" value="Mitochondrial import inner membrane translocase subunit tim13 like domains"/>
    <property type="match status" value="1"/>
</dbReference>
<dbReference type="InterPro" id="IPR004217">
    <property type="entry name" value="Tim10-like"/>
</dbReference>
<dbReference type="InterPro" id="IPR035427">
    <property type="entry name" value="Tim10-like_dom_sf"/>
</dbReference>
<dbReference type="Pfam" id="PF02953">
    <property type="entry name" value="zf-Tim10_DDP"/>
    <property type="match status" value="1"/>
</dbReference>
<dbReference type="SUPFAM" id="SSF144122">
    <property type="entry name" value="Tim10-like"/>
    <property type="match status" value="1"/>
</dbReference>